<accession>P32910</accession>
<accession>D6W1H9</accession>
<dbReference type="EMBL" id="X63746">
    <property type="protein sequence ID" value="CAA45278.1"/>
    <property type="molecule type" value="Genomic_DNA"/>
</dbReference>
<dbReference type="EMBL" id="X77395">
    <property type="protein sequence ID" value="CAA54572.1"/>
    <property type="molecule type" value="Genomic_DNA"/>
</dbReference>
<dbReference type="EMBL" id="Z71618">
    <property type="protein sequence ID" value="CAA96279.1"/>
    <property type="molecule type" value="Genomic_DNA"/>
</dbReference>
<dbReference type="EMBL" id="BK006947">
    <property type="protein sequence ID" value="DAA10545.1"/>
    <property type="molecule type" value="Genomic_DNA"/>
</dbReference>
<dbReference type="PIR" id="A45107">
    <property type="entry name" value="A45107"/>
</dbReference>
<dbReference type="RefSeq" id="NP_014400.1">
    <property type="nucleotide sequence ID" value="NM_001183180.1"/>
</dbReference>
<dbReference type="PDB" id="5FJ8">
    <property type="method" value="EM"/>
    <property type="resolution" value="3.90 A"/>
    <property type="chains" value="P=1-317"/>
</dbReference>
<dbReference type="PDB" id="5FJ9">
    <property type="method" value="EM"/>
    <property type="resolution" value="4.60 A"/>
    <property type="chains" value="P=1-317"/>
</dbReference>
<dbReference type="PDB" id="5FJA">
    <property type="method" value="EM"/>
    <property type="resolution" value="4.65 A"/>
    <property type="chains" value="P=1-317"/>
</dbReference>
<dbReference type="PDB" id="6CNB">
    <property type="method" value="EM"/>
    <property type="resolution" value="4.10 A"/>
    <property type="chains" value="P=1-317"/>
</dbReference>
<dbReference type="PDB" id="6CNC">
    <property type="method" value="EM"/>
    <property type="resolution" value="4.10 A"/>
    <property type="chains" value="P=1-317"/>
</dbReference>
<dbReference type="PDB" id="6CND">
    <property type="method" value="EM"/>
    <property type="resolution" value="4.80 A"/>
    <property type="chains" value="P=1-317"/>
</dbReference>
<dbReference type="PDB" id="6CNF">
    <property type="method" value="EM"/>
    <property type="resolution" value="4.50 A"/>
    <property type="chains" value="P=1-317"/>
</dbReference>
<dbReference type="PDB" id="6EU0">
    <property type="method" value="EM"/>
    <property type="resolution" value="4.00 A"/>
    <property type="chains" value="P=1-317"/>
</dbReference>
<dbReference type="PDB" id="6EU1">
    <property type="method" value="EM"/>
    <property type="resolution" value="3.40 A"/>
    <property type="chains" value="P=1-317"/>
</dbReference>
<dbReference type="PDB" id="6EU2">
    <property type="method" value="EM"/>
    <property type="resolution" value="3.40 A"/>
    <property type="chains" value="P=1-317"/>
</dbReference>
<dbReference type="PDB" id="6EU3">
    <property type="method" value="EM"/>
    <property type="resolution" value="3.30 A"/>
    <property type="chains" value="P=1-317"/>
</dbReference>
<dbReference type="PDB" id="6F40">
    <property type="method" value="EM"/>
    <property type="resolution" value="3.70 A"/>
    <property type="chains" value="P=1-317"/>
</dbReference>
<dbReference type="PDB" id="6F41">
    <property type="method" value="EM"/>
    <property type="resolution" value="4.30 A"/>
    <property type="chains" value="P=1-317"/>
</dbReference>
<dbReference type="PDB" id="6F42">
    <property type="method" value="EM"/>
    <property type="resolution" value="5.50 A"/>
    <property type="chains" value="P=1-317"/>
</dbReference>
<dbReference type="PDB" id="6F44">
    <property type="method" value="EM"/>
    <property type="resolution" value="4.20 A"/>
    <property type="chains" value="P=1-317"/>
</dbReference>
<dbReference type="PDB" id="6TUT">
    <property type="method" value="EM"/>
    <property type="resolution" value="3.25 A"/>
    <property type="chains" value="P=1-317"/>
</dbReference>
<dbReference type="PDB" id="7Z0H">
    <property type="method" value="EM"/>
    <property type="resolution" value="2.60 A"/>
    <property type="chains" value="P=1-317"/>
</dbReference>
<dbReference type="PDB" id="7Z1L">
    <property type="method" value="EM"/>
    <property type="resolution" value="2.80 A"/>
    <property type="chains" value="P=1-317"/>
</dbReference>
<dbReference type="PDB" id="7Z1M">
    <property type="method" value="EM"/>
    <property type="resolution" value="3.40 A"/>
    <property type="chains" value="P=1-317"/>
</dbReference>
<dbReference type="PDB" id="7Z1N">
    <property type="method" value="EM"/>
    <property type="resolution" value="3.90 A"/>
    <property type="chains" value="P=1-317"/>
</dbReference>
<dbReference type="PDB" id="7Z1O">
    <property type="method" value="EM"/>
    <property type="resolution" value="2.70 A"/>
    <property type="chains" value="P=1-317"/>
</dbReference>
<dbReference type="PDB" id="7Z2Z">
    <property type="method" value="EM"/>
    <property type="resolution" value="3.07 A"/>
    <property type="chains" value="P=1-317"/>
</dbReference>
<dbReference type="PDB" id="7Z30">
    <property type="method" value="EM"/>
    <property type="resolution" value="2.90 A"/>
    <property type="chains" value="P=1-317"/>
</dbReference>
<dbReference type="PDB" id="7Z31">
    <property type="method" value="EM"/>
    <property type="resolution" value="2.76 A"/>
    <property type="chains" value="P=1-317"/>
</dbReference>
<dbReference type="PDB" id="8BWS">
    <property type="method" value="EM"/>
    <property type="resolution" value="3.20 A"/>
    <property type="chains" value="P=1-317"/>
</dbReference>
<dbReference type="PDBsum" id="5FJ8"/>
<dbReference type="PDBsum" id="5FJ9"/>
<dbReference type="PDBsum" id="5FJA"/>
<dbReference type="PDBsum" id="6CNB"/>
<dbReference type="PDBsum" id="6CNC"/>
<dbReference type="PDBsum" id="6CND"/>
<dbReference type="PDBsum" id="6CNF"/>
<dbReference type="PDBsum" id="6EU0"/>
<dbReference type="PDBsum" id="6EU1"/>
<dbReference type="PDBsum" id="6EU2"/>
<dbReference type="PDBsum" id="6EU3"/>
<dbReference type="PDBsum" id="6F40"/>
<dbReference type="PDBsum" id="6F41"/>
<dbReference type="PDBsum" id="6F42"/>
<dbReference type="PDBsum" id="6F44"/>
<dbReference type="PDBsum" id="6TUT"/>
<dbReference type="PDBsum" id="7Z0H"/>
<dbReference type="PDBsum" id="7Z1L"/>
<dbReference type="PDBsum" id="7Z1M"/>
<dbReference type="PDBsum" id="7Z1N"/>
<dbReference type="PDBsum" id="7Z1O"/>
<dbReference type="PDBsum" id="7Z2Z"/>
<dbReference type="PDBsum" id="7Z30"/>
<dbReference type="PDBsum" id="7Z31"/>
<dbReference type="PDBsum" id="8BWS"/>
<dbReference type="EMDB" id="EMD-10595"/>
<dbReference type="EMDB" id="EMD-14421"/>
<dbReference type="EMDB" id="EMD-14447"/>
<dbReference type="EMDB" id="EMD-14448"/>
<dbReference type="EMDB" id="EMD-14449"/>
<dbReference type="EMDB" id="EMD-14451"/>
<dbReference type="EMDB" id="EMD-14468"/>
<dbReference type="EMDB" id="EMD-14469"/>
<dbReference type="EMDB" id="EMD-14470"/>
<dbReference type="EMDB" id="EMD-16299"/>
<dbReference type="EMDB" id="EMD-3955"/>
<dbReference type="EMDB" id="EMD-3956"/>
<dbReference type="EMDB" id="EMD-3957"/>
<dbReference type="EMDB" id="EMD-3958"/>
<dbReference type="EMDB" id="EMD-4180"/>
<dbReference type="EMDB" id="EMD-4181"/>
<dbReference type="EMDB" id="EMD-4182"/>
<dbReference type="EMDB" id="EMD-4183"/>
<dbReference type="EMDB" id="EMD-7530"/>
<dbReference type="EMDB" id="EMD-7531"/>
<dbReference type="EMDB" id="EMD-7532"/>
<dbReference type="EMDB" id="EMD-7533"/>
<dbReference type="SMR" id="P32910"/>
<dbReference type="BioGRID" id="35829">
    <property type="interactions" value="487"/>
</dbReference>
<dbReference type="ComplexPortal" id="CPX-2660">
    <property type="entry name" value="DNA-directed RNA polymerase III complex"/>
</dbReference>
<dbReference type="DIP" id="DIP-202N"/>
<dbReference type="FunCoup" id="P32910">
    <property type="interactions" value="870"/>
</dbReference>
<dbReference type="IntAct" id="P32910">
    <property type="interactions" value="32"/>
</dbReference>
<dbReference type="MINT" id="P32910"/>
<dbReference type="STRING" id="4932.YNR003C"/>
<dbReference type="PaxDb" id="4932-YNR003C"/>
<dbReference type="PeptideAtlas" id="P32910"/>
<dbReference type="EnsemblFungi" id="YNR003C_mRNA">
    <property type="protein sequence ID" value="YNR003C"/>
    <property type="gene ID" value="YNR003C"/>
</dbReference>
<dbReference type="GeneID" id="855737"/>
<dbReference type="KEGG" id="sce:YNR003C"/>
<dbReference type="AGR" id="SGD:S000005286"/>
<dbReference type="SGD" id="S000005286">
    <property type="gene designation" value="RPC34"/>
</dbReference>
<dbReference type="VEuPathDB" id="FungiDB:YNR003C"/>
<dbReference type="eggNOG" id="KOG3233">
    <property type="taxonomic scope" value="Eukaryota"/>
</dbReference>
<dbReference type="GeneTree" id="ENSGT00390000009679"/>
<dbReference type="HOGENOM" id="CLU_033661_0_1_1"/>
<dbReference type="InParanoid" id="P32910"/>
<dbReference type="OMA" id="AVYFDEW"/>
<dbReference type="OrthoDB" id="613763at2759"/>
<dbReference type="BioCyc" id="YEAST:G3O-33322-MONOMER"/>
<dbReference type="Reactome" id="R-SCE-76066">
    <property type="pathway name" value="RNA Polymerase III Transcription Initiation From Type 2 Promoter"/>
</dbReference>
<dbReference type="BioGRID-ORCS" id="855737">
    <property type="hits" value="0 hits in 10 CRISPR screens"/>
</dbReference>
<dbReference type="EvolutionaryTrace" id="P32910"/>
<dbReference type="PRO" id="PR:P32910"/>
<dbReference type="Proteomes" id="UP000002311">
    <property type="component" value="Chromosome XIV"/>
</dbReference>
<dbReference type="RNAct" id="P32910">
    <property type="molecule type" value="protein"/>
</dbReference>
<dbReference type="GO" id="GO:0005737">
    <property type="term" value="C:cytoplasm"/>
    <property type="evidence" value="ECO:0007005"/>
    <property type="project" value="SGD"/>
</dbReference>
<dbReference type="GO" id="GO:0005739">
    <property type="term" value="C:mitochondrion"/>
    <property type="evidence" value="ECO:0000353"/>
    <property type="project" value="SGD"/>
</dbReference>
<dbReference type="GO" id="GO:0005654">
    <property type="term" value="C:nucleoplasm"/>
    <property type="evidence" value="ECO:0000304"/>
    <property type="project" value="Reactome"/>
</dbReference>
<dbReference type="GO" id="GO:0005634">
    <property type="term" value="C:nucleus"/>
    <property type="evidence" value="ECO:0007005"/>
    <property type="project" value="SGD"/>
</dbReference>
<dbReference type="GO" id="GO:0005666">
    <property type="term" value="C:RNA polymerase III complex"/>
    <property type="evidence" value="ECO:0000314"/>
    <property type="project" value="SGD"/>
</dbReference>
<dbReference type="GO" id="GO:0006386">
    <property type="term" value="P:termination of RNA polymerase III transcription"/>
    <property type="evidence" value="ECO:0000314"/>
    <property type="project" value="ComplexPortal"/>
</dbReference>
<dbReference type="GO" id="GO:0006383">
    <property type="term" value="P:transcription by RNA polymerase III"/>
    <property type="evidence" value="ECO:0000314"/>
    <property type="project" value="ComplexPortal"/>
</dbReference>
<dbReference type="GO" id="GO:0006384">
    <property type="term" value="P:transcription initiation at RNA polymerase III promoter"/>
    <property type="evidence" value="ECO:0000314"/>
    <property type="project" value="ComplexPortal"/>
</dbReference>
<dbReference type="GO" id="GO:0042797">
    <property type="term" value="P:tRNA transcription by RNA polymerase III"/>
    <property type="evidence" value="ECO:0000314"/>
    <property type="project" value="SGD"/>
</dbReference>
<dbReference type="FunFam" id="1.10.10.10:FF:000116">
    <property type="entry name" value="DNA-directed RNA polymerase III subunit RPC6"/>
    <property type="match status" value="1"/>
</dbReference>
<dbReference type="Gene3D" id="1.10.10.10">
    <property type="entry name" value="Winged helix-like DNA-binding domain superfamily/Winged helix DNA-binding domain"/>
    <property type="match status" value="1"/>
</dbReference>
<dbReference type="InterPro" id="IPR007832">
    <property type="entry name" value="RNA_pol_Rpc34"/>
</dbReference>
<dbReference type="InterPro" id="IPR016049">
    <property type="entry name" value="RNA_pol_Rpc34-like"/>
</dbReference>
<dbReference type="InterPro" id="IPR036388">
    <property type="entry name" value="WH-like_DNA-bd_sf"/>
</dbReference>
<dbReference type="InterPro" id="IPR036390">
    <property type="entry name" value="WH_DNA-bd_sf"/>
</dbReference>
<dbReference type="PANTHER" id="PTHR12780">
    <property type="entry name" value="RNA POLYMERASE III DNA DIRECTED , 39KD SUBUNIT-RELATED"/>
    <property type="match status" value="1"/>
</dbReference>
<dbReference type="Pfam" id="PF05158">
    <property type="entry name" value="RNA_pol_Rpc34"/>
    <property type="match status" value="1"/>
</dbReference>
<dbReference type="PIRSF" id="PIRSF028763">
    <property type="entry name" value="RNA_pol_Rpc34"/>
    <property type="match status" value="1"/>
</dbReference>
<dbReference type="SUPFAM" id="SSF46785">
    <property type="entry name" value="Winged helix' DNA-binding domain"/>
    <property type="match status" value="1"/>
</dbReference>
<name>RPC6_YEAST</name>
<gene>
    <name type="primary">RPC34</name>
    <name type="ordered locus">YNR003C</name>
    <name type="ORF">N2031</name>
</gene>
<feature type="chain" id="PRO_0000073977" description="DNA-directed RNA polymerase III subunit RPC6">
    <location>
        <begin position="1"/>
        <end position="317"/>
    </location>
</feature>
<feature type="mutagenesis site" description="Cold-sensitive. Abolishes interaction with BRF1/TDS4." evidence="2">
    <original>E</original>
    <variation>A</variation>
    <location>
        <position position="89"/>
    </location>
</feature>
<feature type="mutagenesis site" description="Cold-sensitive. No effect on interaction with BRF1/TDS4." evidence="2">
    <original>RE</original>
    <variation>VA</variation>
    <location>
        <begin position="102"/>
        <end position="103"/>
    </location>
</feature>
<feature type="mutagenesis site" description="Temperature-sensitive; cold-sensitive. Abolishes interaction with BRF1/TDS4. Stabilizes Pol III open complex formation.">
    <original>KSVK</original>
    <variation>ASVA</variation>
    <location>
        <begin position="135"/>
        <end position="138"/>
    </location>
</feature>
<feature type="mutagenesis site" description="Cold-sensitive. Abolishes interaction with BRF1/TDS4." evidence="2">
    <original>K</original>
    <variation>A</variation>
    <location>
        <position position="135"/>
    </location>
</feature>
<feature type="mutagenesis site" description="Cold-sensitive. Abolishes interaction with BRF1/TDS4." evidence="2">
    <original>DIE</original>
    <variation>AIA</variation>
    <location>
        <begin position="171"/>
        <end position="173"/>
    </location>
</feature>
<feature type="mutagenesis site" description="Cold-sensitive. Abolishes interaction with BRF1/TDS4.">
    <original>D</original>
    <variation>H</variation>
    <location>
        <position position="171"/>
    </location>
</feature>
<feature type="helix" evidence="6">
    <location>
        <begin position="92"/>
        <end position="100"/>
    </location>
</feature>
<feature type="helix" evidence="6">
    <location>
        <begin position="110"/>
        <end position="112"/>
    </location>
</feature>
<feature type="helix" evidence="6">
    <location>
        <begin position="120"/>
        <end position="130"/>
    </location>
</feature>
<feature type="strand" evidence="6">
    <location>
        <begin position="133"/>
        <end position="137"/>
    </location>
</feature>
<feature type="strand" evidence="6">
    <location>
        <begin position="140"/>
        <end position="145"/>
    </location>
</feature>
<feature type="strand" evidence="6">
    <location>
        <begin position="147"/>
        <end position="151"/>
    </location>
</feature>
<feature type="helix" evidence="7">
    <location>
        <begin position="172"/>
        <end position="190"/>
    </location>
</feature>
<feature type="strand" evidence="7">
    <location>
        <begin position="191"/>
        <end position="193"/>
    </location>
</feature>
<feature type="helix" evidence="7">
    <location>
        <begin position="194"/>
        <end position="199"/>
    </location>
</feature>
<feature type="turn" evidence="7">
    <location>
        <begin position="202"/>
        <end position="204"/>
    </location>
</feature>
<feature type="helix" evidence="7">
    <location>
        <begin position="218"/>
        <end position="228"/>
    </location>
</feature>
<feature type="strand" evidence="7">
    <location>
        <begin position="230"/>
        <end position="233"/>
    </location>
</feature>
<feature type="helix" evidence="7">
    <location>
        <begin position="237"/>
        <end position="246"/>
    </location>
</feature>
<feature type="helix" evidence="7">
    <location>
        <begin position="247"/>
        <end position="251"/>
    </location>
</feature>
<feature type="strand" evidence="8">
    <location>
        <begin position="253"/>
        <end position="256"/>
    </location>
</feature>
<feature type="helix" evidence="7">
    <location>
        <begin position="257"/>
        <end position="259"/>
    </location>
</feature>
<feature type="strand" evidence="8">
    <location>
        <begin position="260"/>
        <end position="262"/>
    </location>
</feature>
<feature type="helix" evidence="7">
    <location>
        <begin position="266"/>
        <end position="270"/>
    </location>
</feature>
<feature type="strand" evidence="7">
    <location>
        <begin position="297"/>
        <end position="299"/>
    </location>
</feature>
<feature type="strand" evidence="4">
    <location>
        <begin position="300"/>
        <end position="302"/>
    </location>
</feature>
<feature type="strand" evidence="5">
    <location>
        <begin position="303"/>
        <end position="309"/>
    </location>
</feature>
<feature type="strand" evidence="5">
    <location>
        <begin position="311"/>
        <end position="313"/>
    </location>
</feature>
<organism>
    <name type="scientific">Saccharomyces cerevisiae (strain ATCC 204508 / S288c)</name>
    <name type="common">Baker's yeast</name>
    <dbReference type="NCBI Taxonomy" id="559292"/>
    <lineage>
        <taxon>Eukaryota</taxon>
        <taxon>Fungi</taxon>
        <taxon>Dikarya</taxon>
        <taxon>Ascomycota</taxon>
        <taxon>Saccharomycotina</taxon>
        <taxon>Saccharomycetes</taxon>
        <taxon>Saccharomycetales</taxon>
        <taxon>Saccharomycetaceae</taxon>
        <taxon>Saccharomyces</taxon>
    </lineage>
</organism>
<comment type="function">
    <text evidence="2">DNA-dependent RNA polymerase catalyzes the transcription of DNA into RNA using the four ribonucleoside triphosphates as substrates. Specific peripheric component of RNA polymerase III which synthesizes small RNAs, such as 5S rRNA and tRNAs. Involved in recruitment of Pol III to the preinitiation complex. Involved in the configuration of an initiation-competent form of RNA polymerase.</text>
</comment>
<comment type="subunit">
    <text evidence="1 2">Component of the RNA polymerase III (Pol III) complex consisting of 17 subunits. Interacts with BRF1/TDS4.</text>
</comment>
<comment type="interaction">
    <interactant intactId="EBI-15835">
        <id>P32910</id>
    </interactant>
    <interactant intactId="EBI-10375">
        <id>P41910</id>
        <label>MAF1</label>
    </interactant>
    <organismsDiffer>false</organismsDiffer>
    <experiments>4</experiments>
</comment>
<comment type="interaction">
    <interactant intactId="EBI-15835">
        <id>P32910</id>
    </interactant>
    <interactant intactId="EBI-15794">
        <id>P20436</id>
        <label>RPB8</label>
    </interactant>
    <organismsDiffer>false</organismsDiffer>
    <experiments>3</experiments>
</comment>
<comment type="interaction">
    <interactant intactId="EBI-15835">
        <id>P32910</id>
    </interactant>
    <interactant intactId="EBI-25782">
        <id>P47076</id>
        <label>RPC17</label>
    </interactant>
    <organismsDiffer>false</organismsDiffer>
    <experiments>3</experiments>
</comment>
<comment type="interaction">
    <interactant intactId="EBI-15835">
        <id>P32910</id>
    </interactant>
    <interactant intactId="EBI-15841">
        <id>P17890</id>
        <label>RPC31</label>
    </interactant>
    <organismsDiffer>false</organismsDiffer>
    <experiments>2</experiments>
</comment>
<comment type="interaction">
    <interactant intactId="EBI-15835">
        <id>P32910</id>
    </interactant>
    <interactant intactId="EBI-15821">
        <id>P32349</id>
        <label>RPC82</label>
    </interactant>
    <organismsDiffer>false</organismsDiffer>
    <experiments>4</experiments>
</comment>
<comment type="subcellular location">
    <subcellularLocation>
        <location>Nucleus</location>
    </subcellularLocation>
</comment>
<comment type="similarity">
    <text evidence="3">Belongs to the eukaryotic RPC34/RPC39 RNA polymerase subunit family.</text>
</comment>
<proteinExistence type="evidence at protein level"/>
<evidence type="ECO:0000269" key="1">
    <source>
    </source>
</evidence>
<evidence type="ECO:0000269" key="2">
    <source>
    </source>
</evidence>
<evidence type="ECO:0000305" key="3"/>
<evidence type="ECO:0007829" key="4">
    <source>
        <dbReference type="PDB" id="6EU1"/>
    </source>
</evidence>
<evidence type="ECO:0007829" key="5">
    <source>
        <dbReference type="PDB" id="6EU3"/>
    </source>
</evidence>
<evidence type="ECO:0007829" key="6">
    <source>
        <dbReference type="PDB" id="6TUT"/>
    </source>
</evidence>
<evidence type="ECO:0007829" key="7">
    <source>
        <dbReference type="PDB" id="7Z31"/>
    </source>
</evidence>
<evidence type="ECO:0007829" key="8">
    <source>
        <dbReference type="PDB" id="8BWS"/>
    </source>
</evidence>
<sequence length="317" mass="36135">MSGMIENGLQLSDNAKTLHSQMMSKGIGALFTQQELQKQMGIGSLTDLMSIVQELLDKNLIKLVKQNDELKFQGVLESEAQKKATMSAEEALVYSYIEASGREGIWSKTIKARTNLHQHVVLKCLKSLESQRYVKSVKSVKFPTRKIYMLYSLQPSVDITGGPWFTDGELDIEFINSLLTIVWRFISENTFPNGFKNFENGPKKNVFYAPNVKNYSTTQEILEFITAAQVANVELTPSNIRSLCEVLVYDDKLEKVTHDCYRVTLESILQMNQGEGEPEAGNKALEDEEEFSIFNYFKMFPASKHDKEVVYFDEWTI</sequence>
<reference key="1">
    <citation type="journal article" date="1992" name="J. Biol. Chem.">
        <title>An essential and specific subunit of RNA polymerase III (C) is encoded by gene RPC34 in Saccharomyces cerevisiae.</title>
        <authorList>
            <person name="Stettler S."/>
            <person name="Mariotte S."/>
            <person name="Riva M."/>
            <person name="Sentenac A."/>
            <person name="Thuriaux P."/>
        </authorList>
    </citation>
    <scope>NUCLEOTIDE SEQUENCE [GENOMIC DNA]</scope>
    <scope>PROTEIN SEQUENCE OF 26-38 AND 214-219</scope>
    <source>
        <strain>S288c / GRF88</strain>
    </source>
</reference>
<reference key="2">
    <citation type="journal article" date="1994" name="Yeast">
        <title>Organization of the centromeric region of chromosome XIV in Saccharomyces cerevisiae.</title>
        <authorList>
            <person name="Lalo D."/>
            <person name="Stettler S."/>
            <person name="Mariotte S."/>
            <person name="Gendreau E."/>
            <person name="Thuriaux P."/>
        </authorList>
    </citation>
    <scope>NUCLEOTIDE SEQUENCE [GENOMIC DNA]</scope>
    <source>
        <strain>S288c / GRF88</strain>
    </source>
</reference>
<reference key="3">
    <citation type="journal article" date="1994" name="Yeast">
        <title>Twelve open reading frames revealed in the 23.6 kb segment flanking the centromere on the Saccharomyces cerevisiae chromosome XIV right arm.</title>
        <authorList>
            <person name="Verhasselt P."/>
            <person name="Aert R."/>
            <person name="Voet M."/>
            <person name="Volckaert G."/>
        </authorList>
    </citation>
    <scope>NUCLEOTIDE SEQUENCE [GENOMIC DNA]</scope>
    <source>
        <strain>ATCC 96604 / S288c / FY1679</strain>
    </source>
</reference>
<reference key="4">
    <citation type="journal article" date="1997" name="Nature">
        <title>The nucleotide sequence of Saccharomyces cerevisiae chromosome XIV and its evolutionary implications.</title>
        <authorList>
            <person name="Philippsen P."/>
            <person name="Kleine K."/>
            <person name="Poehlmann R."/>
            <person name="Duesterhoeft A."/>
            <person name="Hamberg K."/>
            <person name="Hegemann J.H."/>
            <person name="Obermaier B."/>
            <person name="Urrestarazu L.A."/>
            <person name="Aert R."/>
            <person name="Albermann K."/>
            <person name="Altmann R."/>
            <person name="Andre B."/>
            <person name="Baladron V."/>
            <person name="Ballesta J.P.G."/>
            <person name="Becam A.-M."/>
            <person name="Beinhauer J.D."/>
            <person name="Boskovic J."/>
            <person name="Buitrago M.J."/>
            <person name="Bussereau F."/>
            <person name="Coster F."/>
            <person name="Crouzet M."/>
            <person name="D'Angelo M."/>
            <person name="Dal Pero F."/>
            <person name="De Antoni A."/>
            <person name="del Rey F."/>
            <person name="Doignon F."/>
            <person name="Domdey H."/>
            <person name="Dubois E."/>
            <person name="Fiedler T.A."/>
            <person name="Fleig U."/>
            <person name="Floeth M."/>
            <person name="Fritz C."/>
            <person name="Gaillardin C."/>
            <person name="Garcia-Cantalejo J.M."/>
            <person name="Glansdorff N."/>
            <person name="Goffeau A."/>
            <person name="Gueldener U."/>
            <person name="Herbert C.J."/>
            <person name="Heumann K."/>
            <person name="Heuss-Neitzel D."/>
            <person name="Hilbert H."/>
            <person name="Hinni K."/>
            <person name="Iraqui Houssaini I."/>
            <person name="Jacquet M."/>
            <person name="Jimenez A."/>
            <person name="Jonniaux J.-L."/>
            <person name="Karpfinger-Hartl L."/>
            <person name="Lanfranchi G."/>
            <person name="Lepingle A."/>
            <person name="Levesque H."/>
            <person name="Lyck R."/>
            <person name="Maftahi M."/>
            <person name="Mallet L."/>
            <person name="Maurer C.T.C."/>
            <person name="Messenguy F."/>
            <person name="Mewes H.-W."/>
            <person name="Moestl D."/>
            <person name="Nasr F."/>
            <person name="Nicaud J.-M."/>
            <person name="Niedenthal R.K."/>
            <person name="Pandolfo D."/>
            <person name="Pierard A."/>
            <person name="Piravandi E."/>
            <person name="Planta R.J."/>
            <person name="Pohl T.M."/>
            <person name="Purnelle B."/>
            <person name="Rebischung C."/>
            <person name="Remacha M.A."/>
            <person name="Revuelta J.L."/>
            <person name="Rinke M."/>
            <person name="Saiz J.E."/>
            <person name="Sartorello F."/>
            <person name="Scherens B."/>
            <person name="Sen-Gupta M."/>
            <person name="Soler-Mira A."/>
            <person name="Urbanus J.H.M."/>
            <person name="Valle G."/>
            <person name="Van Dyck L."/>
            <person name="Verhasselt P."/>
            <person name="Vierendeels F."/>
            <person name="Vissers S."/>
            <person name="Voet M."/>
            <person name="Volckaert G."/>
            <person name="Wach A."/>
            <person name="Wambutt R."/>
            <person name="Wedler H."/>
            <person name="Zollner A."/>
            <person name="Hani J."/>
        </authorList>
    </citation>
    <scope>NUCLEOTIDE SEQUENCE [LARGE SCALE GENOMIC DNA]</scope>
    <source>
        <strain>ATCC 204508 / S288c</strain>
    </source>
</reference>
<reference key="5">
    <citation type="journal article" date="2014" name="G3 (Bethesda)">
        <title>The reference genome sequence of Saccharomyces cerevisiae: Then and now.</title>
        <authorList>
            <person name="Engel S.R."/>
            <person name="Dietrich F.S."/>
            <person name="Fisk D.G."/>
            <person name="Binkley G."/>
            <person name="Balakrishnan R."/>
            <person name="Costanzo M.C."/>
            <person name="Dwight S.S."/>
            <person name="Hitz B.C."/>
            <person name="Karra K."/>
            <person name="Nash R.S."/>
            <person name="Weng S."/>
            <person name="Wong E.D."/>
            <person name="Lloyd P."/>
            <person name="Skrzypek M.S."/>
            <person name="Miyasato S.R."/>
            <person name="Simison M."/>
            <person name="Cherry J.M."/>
        </authorList>
    </citation>
    <scope>GENOME REANNOTATION</scope>
    <source>
        <strain>ATCC 204508 / S288c</strain>
    </source>
</reference>
<reference key="6">
    <citation type="journal article" date="1993" name="J. Biol. Chem.">
        <title>Interaction between a complex of RNA polymerase III subunits and the 70-kDa component of transcription factor IIIB.</title>
        <authorList>
            <person name="Werner M."/>
            <person name="Chaussivert N."/>
            <person name="Willis I.M."/>
            <person name="Sentenac A."/>
        </authorList>
    </citation>
    <scope>INTERACTION WITH BRF1</scope>
</reference>
<reference key="7">
    <citation type="journal article" date="1997" name="EMBO J.">
        <title>Dual role of the C34 subunit of RNA polymerase III in transcription initiation.</title>
        <authorList>
            <person name="Brun I."/>
            <person name="Sentenac A."/>
            <person name="Werner M."/>
        </authorList>
    </citation>
    <scope>FUNCTION</scope>
    <scope>INTERACTION WITH BRF1</scope>
    <scope>MUTAGENESIS OF GLU-89; 102-ARG-GLU-103; LYS-135 AND 171-ASP-GLU-173</scope>
</reference>
<reference key="8">
    <citation type="journal article" date="1998" name="Cold Spring Harb. Symp. Quant. Biol.">
        <title>The yeast RNA polymerase III transcription machinery: a paradigm for eukaryotic gene activation.</title>
        <authorList>
            <person name="Chedin S."/>
            <person name="Ferri M.L."/>
            <person name="Peyroche G."/>
            <person name="Andrau J.-C."/>
            <person name="Jourdain S."/>
            <person name="Lefebvre O."/>
            <person name="Werner M."/>
            <person name="Carles C."/>
            <person name="Sentenac A."/>
        </authorList>
    </citation>
    <scope>REVIEW ON THE RNA POL III COMPLEX</scope>
</reference>
<protein>
    <recommendedName>
        <fullName>DNA-directed RNA polymerase III subunit RPC6</fullName>
        <shortName>RNA polymerase III subunit C6</shortName>
    </recommendedName>
    <alternativeName>
        <fullName>C34</fullName>
    </alternativeName>
    <alternativeName>
        <fullName>DNA-directed RNA polymerase III 36 kDa polypeptide</fullName>
    </alternativeName>
</protein>
<keyword id="KW-0002">3D-structure</keyword>
<keyword id="KW-0903">Direct protein sequencing</keyword>
<keyword id="KW-0240">DNA-directed RNA polymerase</keyword>
<keyword id="KW-0539">Nucleus</keyword>
<keyword id="KW-1185">Reference proteome</keyword>
<keyword id="KW-0804">Transcription</keyword>